<evidence type="ECO:0000255" key="1">
    <source>
        <dbReference type="HAMAP-Rule" id="MF_00165"/>
    </source>
</evidence>
<accession>Q8XYH4</accession>
<gene>
    <name evidence="1" type="primary">tmk</name>
    <name type="ordered locus">RSc1784</name>
    <name type="ORF">RS04182</name>
</gene>
<reference key="1">
    <citation type="journal article" date="2002" name="Nature">
        <title>Genome sequence of the plant pathogen Ralstonia solanacearum.</title>
        <authorList>
            <person name="Salanoubat M."/>
            <person name="Genin S."/>
            <person name="Artiguenave F."/>
            <person name="Gouzy J."/>
            <person name="Mangenot S."/>
            <person name="Arlat M."/>
            <person name="Billault A."/>
            <person name="Brottier P."/>
            <person name="Camus J.-C."/>
            <person name="Cattolico L."/>
            <person name="Chandler M."/>
            <person name="Choisne N."/>
            <person name="Claudel-Renard C."/>
            <person name="Cunnac S."/>
            <person name="Demange N."/>
            <person name="Gaspin C."/>
            <person name="Lavie M."/>
            <person name="Moisan A."/>
            <person name="Robert C."/>
            <person name="Saurin W."/>
            <person name="Schiex T."/>
            <person name="Siguier P."/>
            <person name="Thebault P."/>
            <person name="Whalen M."/>
            <person name="Wincker P."/>
            <person name="Levy M."/>
            <person name="Weissenbach J."/>
            <person name="Boucher C.A."/>
        </authorList>
    </citation>
    <scope>NUCLEOTIDE SEQUENCE [LARGE SCALE GENOMIC DNA]</scope>
    <source>
        <strain>ATCC BAA-1114 / GMI1000</strain>
    </source>
</reference>
<comment type="function">
    <text evidence="1">Phosphorylation of dTMP to form dTDP in both de novo and salvage pathways of dTTP synthesis.</text>
</comment>
<comment type="catalytic activity">
    <reaction evidence="1">
        <text>dTMP + ATP = dTDP + ADP</text>
        <dbReference type="Rhea" id="RHEA:13517"/>
        <dbReference type="ChEBI" id="CHEBI:30616"/>
        <dbReference type="ChEBI" id="CHEBI:58369"/>
        <dbReference type="ChEBI" id="CHEBI:63528"/>
        <dbReference type="ChEBI" id="CHEBI:456216"/>
        <dbReference type="EC" id="2.7.4.9"/>
    </reaction>
</comment>
<comment type="similarity">
    <text evidence="1">Belongs to the thymidylate kinase family.</text>
</comment>
<name>KTHY_RALN1</name>
<dbReference type="EC" id="2.7.4.9" evidence="1"/>
<dbReference type="EMBL" id="AL646052">
    <property type="protein sequence ID" value="CAD15486.1"/>
    <property type="molecule type" value="Genomic_DNA"/>
</dbReference>
<dbReference type="RefSeq" id="WP_011001722.1">
    <property type="nucleotide sequence ID" value="NC_003295.1"/>
</dbReference>
<dbReference type="SMR" id="Q8XYH4"/>
<dbReference type="STRING" id="267608.RSc1784"/>
<dbReference type="EnsemblBacteria" id="CAD15486">
    <property type="protein sequence ID" value="CAD15486"/>
    <property type="gene ID" value="RSc1784"/>
</dbReference>
<dbReference type="KEGG" id="rso:RSc1784"/>
<dbReference type="eggNOG" id="COG0125">
    <property type="taxonomic scope" value="Bacteria"/>
</dbReference>
<dbReference type="HOGENOM" id="CLU_049131_0_2_4"/>
<dbReference type="Proteomes" id="UP000001436">
    <property type="component" value="Chromosome"/>
</dbReference>
<dbReference type="GO" id="GO:0005829">
    <property type="term" value="C:cytosol"/>
    <property type="evidence" value="ECO:0007669"/>
    <property type="project" value="TreeGrafter"/>
</dbReference>
<dbReference type="GO" id="GO:0005524">
    <property type="term" value="F:ATP binding"/>
    <property type="evidence" value="ECO:0007669"/>
    <property type="project" value="UniProtKB-UniRule"/>
</dbReference>
<dbReference type="GO" id="GO:0004798">
    <property type="term" value="F:dTMP kinase activity"/>
    <property type="evidence" value="ECO:0007669"/>
    <property type="project" value="UniProtKB-UniRule"/>
</dbReference>
<dbReference type="GO" id="GO:0006233">
    <property type="term" value="P:dTDP biosynthetic process"/>
    <property type="evidence" value="ECO:0007669"/>
    <property type="project" value="InterPro"/>
</dbReference>
<dbReference type="GO" id="GO:0006235">
    <property type="term" value="P:dTTP biosynthetic process"/>
    <property type="evidence" value="ECO:0007669"/>
    <property type="project" value="UniProtKB-UniRule"/>
</dbReference>
<dbReference type="GO" id="GO:0006227">
    <property type="term" value="P:dUDP biosynthetic process"/>
    <property type="evidence" value="ECO:0007669"/>
    <property type="project" value="TreeGrafter"/>
</dbReference>
<dbReference type="CDD" id="cd01672">
    <property type="entry name" value="TMPK"/>
    <property type="match status" value="1"/>
</dbReference>
<dbReference type="FunFam" id="3.40.50.300:FF:000225">
    <property type="entry name" value="Thymidylate kinase"/>
    <property type="match status" value="1"/>
</dbReference>
<dbReference type="Gene3D" id="3.40.50.300">
    <property type="entry name" value="P-loop containing nucleotide triphosphate hydrolases"/>
    <property type="match status" value="1"/>
</dbReference>
<dbReference type="HAMAP" id="MF_00165">
    <property type="entry name" value="Thymidylate_kinase"/>
    <property type="match status" value="1"/>
</dbReference>
<dbReference type="InterPro" id="IPR027417">
    <property type="entry name" value="P-loop_NTPase"/>
</dbReference>
<dbReference type="InterPro" id="IPR039430">
    <property type="entry name" value="Thymidylate_kin-like_dom"/>
</dbReference>
<dbReference type="InterPro" id="IPR018094">
    <property type="entry name" value="Thymidylate_kinase"/>
</dbReference>
<dbReference type="NCBIfam" id="TIGR00041">
    <property type="entry name" value="DTMP_kinase"/>
    <property type="match status" value="1"/>
</dbReference>
<dbReference type="PANTHER" id="PTHR10344">
    <property type="entry name" value="THYMIDYLATE KINASE"/>
    <property type="match status" value="1"/>
</dbReference>
<dbReference type="PANTHER" id="PTHR10344:SF4">
    <property type="entry name" value="UMP-CMP KINASE 2, MITOCHONDRIAL"/>
    <property type="match status" value="1"/>
</dbReference>
<dbReference type="Pfam" id="PF02223">
    <property type="entry name" value="Thymidylate_kin"/>
    <property type="match status" value="1"/>
</dbReference>
<dbReference type="SUPFAM" id="SSF52540">
    <property type="entry name" value="P-loop containing nucleoside triphosphate hydrolases"/>
    <property type="match status" value="1"/>
</dbReference>
<organism>
    <name type="scientific">Ralstonia nicotianae (strain ATCC BAA-1114 / GMI1000)</name>
    <name type="common">Ralstonia solanacearum</name>
    <dbReference type="NCBI Taxonomy" id="267608"/>
    <lineage>
        <taxon>Bacteria</taxon>
        <taxon>Pseudomonadati</taxon>
        <taxon>Pseudomonadota</taxon>
        <taxon>Betaproteobacteria</taxon>
        <taxon>Burkholderiales</taxon>
        <taxon>Burkholderiaceae</taxon>
        <taxon>Ralstonia</taxon>
        <taxon>Ralstonia solanacearum species complex</taxon>
    </lineage>
</organism>
<protein>
    <recommendedName>
        <fullName evidence="1">Thymidylate kinase</fullName>
        <ecNumber evidence="1">2.7.4.9</ecNumber>
    </recommendedName>
    <alternativeName>
        <fullName evidence="1">dTMP kinase</fullName>
    </alternativeName>
</protein>
<keyword id="KW-0067">ATP-binding</keyword>
<keyword id="KW-0418">Kinase</keyword>
<keyword id="KW-0545">Nucleotide biosynthesis</keyword>
<keyword id="KW-0547">Nucleotide-binding</keyword>
<keyword id="KW-1185">Reference proteome</keyword>
<keyword id="KW-0808">Transferase</keyword>
<proteinExistence type="inferred from homology"/>
<sequence>MTGKFITFEGIDGAGKSTHLAWFAQQLEARLAPQGRKVVVTREPGGTPLGERLREVLLHERMHLETEALLMFASRREHIAEVIQPALERGDWVISDRFTDATFAYQGGGRGLAIERLEALEQWVQQGLQPTRTLLFDLAPEVAAARLADARTPDKFEAESAQFFVRTRAEYLRRAAAEPGRFVVIDAARARDDIRKDLEKLLASL</sequence>
<feature type="chain" id="PRO_0000155326" description="Thymidylate kinase">
    <location>
        <begin position="1"/>
        <end position="205"/>
    </location>
</feature>
<feature type="binding site" evidence="1">
    <location>
        <begin position="10"/>
        <end position="17"/>
    </location>
    <ligand>
        <name>ATP</name>
        <dbReference type="ChEBI" id="CHEBI:30616"/>
    </ligand>
</feature>